<organism>
    <name type="scientific">Canis lupus familiaris</name>
    <name type="common">Dog</name>
    <name type="synonym">Canis familiaris</name>
    <dbReference type="NCBI Taxonomy" id="9615"/>
    <lineage>
        <taxon>Eukaryota</taxon>
        <taxon>Metazoa</taxon>
        <taxon>Chordata</taxon>
        <taxon>Craniata</taxon>
        <taxon>Vertebrata</taxon>
        <taxon>Euteleostomi</taxon>
        <taxon>Mammalia</taxon>
        <taxon>Eutheria</taxon>
        <taxon>Laurasiatheria</taxon>
        <taxon>Carnivora</taxon>
        <taxon>Caniformia</taxon>
        <taxon>Canidae</taxon>
        <taxon>Canis</taxon>
    </lineage>
</organism>
<name>RHOA_CANLF</name>
<sequence>MAAIRKKLVIVGDGACGKTCLLIVFSKDQFPEVYVPTVFENYVADIEVDGKQVELALWDTAGQEDYDRLRPLSYPDTDVILMCFSIDSPDSLENIPEKWTPEVKHFCPNVPIILVGNKKDLRNDEHTRRELAKMKQEPVKPTEGRDMANRIGAFGYMECSAKTKDGVREVFEMATRAALQARRGKKKSGCLVL</sequence>
<evidence type="ECO:0000250" key="1">
    <source>
        <dbReference type="UniProtKB" id="P61585"/>
    </source>
</evidence>
<evidence type="ECO:0000250" key="2">
    <source>
        <dbReference type="UniProtKB" id="P61586"/>
    </source>
</evidence>
<evidence type="ECO:0000250" key="3">
    <source>
        <dbReference type="UniProtKB" id="P61589"/>
    </source>
</evidence>
<evidence type="ECO:0000250" key="4">
    <source>
        <dbReference type="UniProtKB" id="P62820"/>
    </source>
</evidence>
<evidence type="ECO:0000250" key="5">
    <source>
        <dbReference type="UniProtKB" id="Q9QUI0"/>
    </source>
</evidence>
<evidence type="ECO:0000255" key="6"/>
<evidence type="ECO:0000305" key="7"/>
<proteinExistence type="evidence at transcript level"/>
<reference key="1">
    <citation type="journal article" date="1990" name="Mol. Cell. Biol.">
        <title>Molecular cloning of YPT1/SEC4-related cDNAs from an epithelial cell line.</title>
        <authorList>
            <person name="Chavrier P."/>
            <person name="Vingron M."/>
            <person name="Sander C."/>
            <person name="Simons K."/>
            <person name="Zerial M."/>
        </authorList>
    </citation>
    <scope>NUCLEOTIDE SEQUENCE [MRNA]</scope>
    <source>
        <strain>Cocker spaniel</strain>
        <tissue>Kidney</tissue>
    </source>
</reference>
<feature type="chain" id="PRO_0000030409" description="Transforming protein RhoA">
    <location>
        <begin position="1"/>
        <end position="190"/>
    </location>
</feature>
<feature type="propeptide" id="PRO_0000030410" description="Removed in mature form" evidence="1">
    <location>
        <begin position="191"/>
        <end position="193"/>
    </location>
</feature>
<feature type="region of interest" description="Switch II region; involved in RAP1GDS1 binding" evidence="2">
    <location>
        <begin position="61"/>
        <end position="78"/>
    </location>
</feature>
<feature type="short sequence motif" description="Effector region" evidence="6">
    <location>
        <begin position="34"/>
        <end position="42"/>
    </location>
</feature>
<feature type="binding site" evidence="2">
    <location>
        <begin position="12"/>
        <end position="19"/>
    </location>
    <ligand>
        <name>GTP</name>
        <dbReference type="ChEBI" id="CHEBI:37565"/>
    </ligand>
</feature>
<feature type="binding site" evidence="4">
    <location>
        <begin position="30"/>
        <end position="37"/>
    </location>
    <ligand>
        <name>GTP</name>
        <dbReference type="ChEBI" id="CHEBI:37565"/>
    </ligand>
</feature>
<feature type="binding site" evidence="4">
    <location>
        <begin position="59"/>
        <end position="63"/>
    </location>
    <ligand>
        <name>GTP</name>
        <dbReference type="ChEBI" id="CHEBI:37565"/>
    </ligand>
</feature>
<feature type="binding site" evidence="2">
    <location>
        <begin position="117"/>
        <end position="120"/>
    </location>
    <ligand>
        <name>GTP</name>
        <dbReference type="ChEBI" id="CHEBI:37565"/>
    </ligand>
</feature>
<feature type="binding site" evidence="4">
    <location>
        <begin position="160"/>
        <end position="162"/>
    </location>
    <ligand>
        <name>GTP</name>
        <dbReference type="ChEBI" id="CHEBI:37565"/>
    </ligand>
</feature>
<feature type="modified residue" description="5-glutamyl serotonin" evidence="5">
    <location>
        <position position="63"/>
    </location>
</feature>
<feature type="modified residue" description="Phosphoserine; by PKG/PRKG1" evidence="3">
    <location>
        <position position="188"/>
    </location>
</feature>
<feature type="modified residue" description="Cysteine methyl ester" evidence="1">
    <location>
        <position position="190"/>
    </location>
</feature>
<feature type="lipid moiety-binding region" description="S-geranylgeranyl cysteine" evidence="1">
    <location>
        <position position="190"/>
    </location>
</feature>
<feature type="cross-link" description="Glycyl lysine isopeptide (Lys-Gly) (interchain with G-Cter in ubiquitin)" evidence="2">
    <location>
        <position position="135"/>
    </location>
</feature>
<dbReference type="EC" id="3.6.5.2" evidence="2"/>
<dbReference type="EMBL" id="X56391">
    <property type="protein sequence ID" value="CAA39802.1"/>
    <property type="molecule type" value="mRNA"/>
</dbReference>
<dbReference type="PIR" id="H36364">
    <property type="entry name" value="H36364"/>
</dbReference>
<dbReference type="BMRB" id="P24406"/>
<dbReference type="SMR" id="P24406"/>
<dbReference type="FunCoup" id="P24406">
    <property type="interactions" value="2115"/>
</dbReference>
<dbReference type="STRING" id="9615.ENSCAFP00000030438"/>
<dbReference type="PaxDb" id="9612-ENSCAFP00000030438"/>
<dbReference type="eggNOG" id="KOG0393">
    <property type="taxonomic scope" value="Eukaryota"/>
</dbReference>
<dbReference type="InParanoid" id="P24406"/>
<dbReference type="OrthoDB" id="8830751at2759"/>
<dbReference type="Proteomes" id="UP000002254">
    <property type="component" value="Unplaced"/>
</dbReference>
<dbReference type="Proteomes" id="UP000694429">
    <property type="component" value="Unplaced"/>
</dbReference>
<dbReference type="Proteomes" id="UP000694542">
    <property type="component" value="Unplaced"/>
</dbReference>
<dbReference type="Proteomes" id="UP000805418">
    <property type="component" value="Unplaced"/>
</dbReference>
<dbReference type="GO" id="GO:0043296">
    <property type="term" value="C:apical junction complex"/>
    <property type="evidence" value="ECO:0000250"/>
    <property type="project" value="UniProtKB"/>
</dbReference>
<dbReference type="GO" id="GO:0005938">
    <property type="term" value="C:cell cortex"/>
    <property type="evidence" value="ECO:0000250"/>
    <property type="project" value="UniProtKB"/>
</dbReference>
<dbReference type="GO" id="GO:0032154">
    <property type="term" value="C:cleavage furrow"/>
    <property type="evidence" value="ECO:0000318"/>
    <property type="project" value="GO_Central"/>
</dbReference>
<dbReference type="GO" id="GO:0009898">
    <property type="term" value="C:cytoplasmic side of plasma membrane"/>
    <property type="evidence" value="ECO:0000250"/>
    <property type="project" value="UniProtKB"/>
</dbReference>
<dbReference type="GO" id="GO:0005856">
    <property type="term" value="C:cytoskeleton"/>
    <property type="evidence" value="ECO:0007669"/>
    <property type="project" value="UniProtKB-SubCell"/>
</dbReference>
<dbReference type="GO" id="GO:0005829">
    <property type="term" value="C:cytosol"/>
    <property type="evidence" value="ECO:0000250"/>
    <property type="project" value="UniProtKB"/>
</dbReference>
<dbReference type="GO" id="GO:0043197">
    <property type="term" value="C:dendritic spine"/>
    <property type="evidence" value="ECO:0000318"/>
    <property type="project" value="GO_Central"/>
</dbReference>
<dbReference type="GO" id="GO:0030027">
    <property type="term" value="C:lamellipodium"/>
    <property type="evidence" value="ECO:0000250"/>
    <property type="project" value="UniProtKB"/>
</dbReference>
<dbReference type="GO" id="GO:0030496">
    <property type="term" value="C:midbody"/>
    <property type="evidence" value="ECO:0007669"/>
    <property type="project" value="UniProtKB-SubCell"/>
</dbReference>
<dbReference type="GO" id="GO:0005634">
    <property type="term" value="C:nucleus"/>
    <property type="evidence" value="ECO:0007669"/>
    <property type="project" value="UniProtKB-SubCell"/>
</dbReference>
<dbReference type="GO" id="GO:0005886">
    <property type="term" value="C:plasma membrane"/>
    <property type="evidence" value="ECO:0000318"/>
    <property type="project" value="GO_Central"/>
</dbReference>
<dbReference type="GO" id="GO:0003925">
    <property type="term" value="F:G protein activity"/>
    <property type="evidence" value="ECO:0007669"/>
    <property type="project" value="UniProtKB-EC"/>
</dbReference>
<dbReference type="GO" id="GO:0005525">
    <property type="term" value="F:GTP binding"/>
    <property type="evidence" value="ECO:0000250"/>
    <property type="project" value="UniProtKB"/>
</dbReference>
<dbReference type="GO" id="GO:0003924">
    <property type="term" value="F:GTPase activity"/>
    <property type="evidence" value="ECO:0000250"/>
    <property type="project" value="UniProtKB"/>
</dbReference>
<dbReference type="GO" id="GO:0019901">
    <property type="term" value="F:protein kinase binding"/>
    <property type="evidence" value="ECO:0000318"/>
    <property type="project" value="GO_Central"/>
</dbReference>
<dbReference type="GO" id="GO:0030036">
    <property type="term" value="P:actin cytoskeleton organization"/>
    <property type="evidence" value="ECO:0000250"/>
    <property type="project" value="UniProtKB"/>
</dbReference>
<dbReference type="GO" id="GO:0043297">
    <property type="term" value="P:apical junction assembly"/>
    <property type="evidence" value="ECO:0000250"/>
    <property type="project" value="UniProtKB"/>
</dbReference>
<dbReference type="GO" id="GO:0034329">
    <property type="term" value="P:cell junction assembly"/>
    <property type="evidence" value="ECO:0000250"/>
    <property type="project" value="UniProtKB"/>
</dbReference>
<dbReference type="GO" id="GO:0016477">
    <property type="term" value="P:cell migration"/>
    <property type="evidence" value="ECO:0000250"/>
    <property type="project" value="UniProtKB"/>
</dbReference>
<dbReference type="GO" id="GO:1990869">
    <property type="term" value="P:cellular response to chemokine"/>
    <property type="evidence" value="ECO:0000250"/>
    <property type="project" value="UniProtKB"/>
</dbReference>
<dbReference type="GO" id="GO:0036089">
    <property type="term" value="P:cleavage furrow formation"/>
    <property type="evidence" value="ECO:0000250"/>
    <property type="project" value="UniProtKB"/>
</dbReference>
<dbReference type="GO" id="GO:0031122">
    <property type="term" value="P:cytoplasmic microtubule organization"/>
    <property type="evidence" value="ECO:0000250"/>
    <property type="project" value="UniProtKB"/>
</dbReference>
<dbReference type="GO" id="GO:0045198">
    <property type="term" value="P:establishment of epithelial cell apical/basal polarity"/>
    <property type="evidence" value="ECO:0000250"/>
    <property type="project" value="UniProtKB"/>
</dbReference>
<dbReference type="GO" id="GO:1903673">
    <property type="term" value="P:mitotic cleavage furrow formation"/>
    <property type="evidence" value="ECO:0000250"/>
    <property type="project" value="UniProtKB"/>
</dbReference>
<dbReference type="GO" id="GO:0043123">
    <property type="term" value="P:positive regulation of canonical NF-kappaB signal transduction"/>
    <property type="evidence" value="ECO:0000250"/>
    <property type="project" value="UniProtKB"/>
</dbReference>
<dbReference type="GO" id="GO:0032467">
    <property type="term" value="P:positive regulation of cytokinesis"/>
    <property type="evidence" value="ECO:0000250"/>
    <property type="project" value="UniProtKB"/>
</dbReference>
<dbReference type="GO" id="GO:0071902">
    <property type="term" value="P:positive regulation of protein serine/threonine kinase activity"/>
    <property type="evidence" value="ECO:0000250"/>
    <property type="project" value="UniProtKB"/>
</dbReference>
<dbReference type="GO" id="GO:2000406">
    <property type="term" value="P:positive regulation of T cell migration"/>
    <property type="evidence" value="ECO:0000250"/>
    <property type="project" value="UniProtKB"/>
</dbReference>
<dbReference type="GO" id="GO:0032956">
    <property type="term" value="P:regulation of actin cytoskeleton organization"/>
    <property type="evidence" value="ECO:0000318"/>
    <property type="project" value="GO_Central"/>
</dbReference>
<dbReference type="GO" id="GO:0030334">
    <property type="term" value="P:regulation of cell migration"/>
    <property type="evidence" value="ECO:0000250"/>
    <property type="project" value="UniProtKB"/>
</dbReference>
<dbReference type="GO" id="GO:0007266">
    <property type="term" value="P:Rho protein signal transduction"/>
    <property type="evidence" value="ECO:0000250"/>
    <property type="project" value="UniProtKB"/>
</dbReference>
<dbReference type="GO" id="GO:0035385">
    <property type="term" value="P:Roundabout signaling pathway"/>
    <property type="evidence" value="ECO:0000250"/>
    <property type="project" value="UniProtKB"/>
</dbReference>
<dbReference type="GO" id="GO:1902766">
    <property type="term" value="P:skeletal muscle satellite cell migration"/>
    <property type="evidence" value="ECO:0000250"/>
    <property type="project" value="AgBase"/>
</dbReference>
<dbReference type="GO" id="GO:0043149">
    <property type="term" value="P:stress fiber assembly"/>
    <property type="evidence" value="ECO:0000250"/>
    <property type="project" value="UniProtKB"/>
</dbReference>
<dbReference type="GO" id="GO:0034446">
    <property type="term" value="P:substrate adhesion-dependent cell spreading"/>
    <property type="evidence" value="ECO:0000250"/>
    <property type="project" value="UniProtKB"/>
</dbReference>
<dbReference type="GO" id="GO:0044319">
    <property type="term" value="P:wound healing, spreading of cells"/>
    <property type="evidence" value="ECO:0000250"/>
    <property type="project" value="AgBase"/>
</dbReference>
<dbReference type="CDD" id="cd01870">
    <property type="entry name" value="RhoA_like"/>
    <property type="match status" value="1"/>
</dbReference>
<dbReference type="FunFam" id="3.40.50.300:FF:000095">
    <property type="entry name" value="Rho-related GTP-binding protein RhoC"/>
    <property type="match status" value="1"/>
</dbReference>
<dbReference type="Gene3D" id="3.40.50.300">
    <property type="entry name" value="P-loop containing nucleotide triphosphate hydrolases"/>
    <property type="match status" value="1"/>
</dbReference>
<dbReference type="InterPro" id="IPR027417">
    <property type="entry name" value="P-loop_NTPase"/>
</dbReference>
<dbReference type="InterPro" id="IPR005225">
    <property type="entry name" value="Small_GTP-bd"/>
</dbReference>
<dbReference type="InterPro" id="IPR001806">
    <property type="entry name" value="Small_GTPase"/>
</dbReference>
<dbReference type="InterPro" id="IPR003578">
    <property type="entry name" value="Small_GTPase_Rho"/>
</dbReference>
<dbReference type="NCBIfam" id="TIGR00231">
    <property type="entry name" value="small_GTP"/>
    <property type="match status" value="1"/>
</dbReference>
<dbReference type="PANTHER" id="PTHR24072">
    <property type="entry name" value="RHO FAMILY GTPASE"/>
    <property type="match status" value="1"/>
</dbReference>
<dbReference type="Pfam" id="PF00071">
    <property type="entry name" value="Ras"/>
    <property type="match status" value="1"/>
</dbReference>
<dbReference type="PRINTS" id="PR00449">
    <property type="entry name" value="RASTRNSFRMNG"/>
</dbReference>
<dbReference type="SMART" id="SM00175">
    <property type="entry name" value="RAB"/>
    <property type="match status" value="1"/>
</dbReference>
<dbReference type="SMART" id="SM00173">
    <property type="entry name" value="RAS"/>
    <property type="match status" value="1"/>
</dbReference>
<dbReference type="SMART" id="SM00174">
    <property type="entry name" value="RHO"/>
    <property type="match status" value="1"/>
</dbReference>
<dbReference type="SUPFAM" id="SSF52540">
    <property type="entry name" value="P-loop containing nucleoside triphosphate hydrolases"/>
    <property type="match status" value="1"/>
</dbReference>
<dbReference type="PROSITE" id="PS51420">
    <property type="entry name" value="RHO"/>
    <property type="match status" value="1"/>
</dbReference>
<protein>
    <recommendedName>
        <fullName>Transforming protein RhoA</fullName>
        <ecNumber evidence="2">3.6.5.2</ecNumber>
    </recommendedName>
    <alternativeName>
        <fullName>Rho1</fullName>
    </alternativeName>
</protein>
<keyword id="KW-0131">Cell cycle</keyword>
<keyword id="KW-0132">Cell division</keyword>
<keyword id="KW-1003">Cell membrane</keyword>
<keyword id="KW-0966">Cell projection</keyword>
<keyword id="KW-0963">Cytoplasm</keyword>
<keyword id="KW-0206">Cytoskeleton</keyword>
<keyword id="KW-0342">GTP-binding</keyword>
<keyword id="KW-0378">Hydrolase</keyword>
<keyword id="KW-1017">Isopeptide bond</keyword>
<keyword id="KW-0449">Lipoprotein</keyword>
<keyword id="KW-0472">Membrane</keyword>
<keyword id="KW-0488">Methylation</keyword>
<keyword id="KW-0547">Nucleotide-binding</keyword>
<keyword id="KW-0539">Nucleus</keyword>
<keyword id="KW-0597">Phosphoprotein</keyword>
<keyword id="KW-0636">Prenylation</keyword>
<keyword id="KW-0656">Proto-oncogene</keyword>
<keyword id="KW-1185">Reference proteome</keyword>
<keyword id="KW-0832">Ubl conjugation</keyword>
<gene>
    <name type="primary">RHOA</name>
    <name type="synonym">ARHA</name>
    <name type="synonym">RHO1</name>
</gene>
<comment type="function">
    <text evidence="2 3 5">Small GTPase which cycles between an active GTP-bound and an inactive GDP-bound state. Mainly associated with cytoskeleton organization, in active state binds to a variety of effector proteins to regulate cellular responses such as cytoskeletal dynamics, cell migration and cell cycle. Regulates a signal transduction pathway linking plasma membrane receptors to the assembly of focal adhesions and actin stress fibers. Involved in a microtubule-dependent signal that is required for the myosin contractile ring formation during cell cycle cytokinesis. Plays an essential role in cleavage furrow formation. Required for the apical junction formation of keratinocyte cell-cell adhesion. Essential for the SPATA13-mediated regulation of cell migration and adhesion assembly and disassembly. The MEMO1-RHOA-DIAPH1 signaling pathway plays an important role in ERBB2-dependent stabilization of microtubules at the cell cortex. It controls the localization of APC and CLASP2 to the cell membrane, via the regulation of GSK3B activity. In turn, membrane-bound APC allows the localization of the MACF1 to the cell membrane, which is required for microtubule capture and stabilization. Regulates KCNA2 potassium channel activity by reducing its location at the cell surface in response to CHRM1 activation; promotes KCNA2 endocytosis. Acts as an allosteric activator of guanine nucleotide exchange factor ECT2 by binding in its activated GTP-bound form to the PH domain of ECT2 which stimulates the release of PH inhibition and promotes the binding of substrate RHOA to the ECT2 catalytic center. May be an activator of PLCE1. In neurons, involved in the inhibition of the initial spine growth. Upon activation by CaMKII, modulates dendritic spine structural plasticity by relaying CaMKII transient activation to synapse-specific, long-term signaling. Acts as a regulator of platelet alpha-granule release during activation and aggregation of platelets. When activated by DAAM1 may signal centrosome maturation and chromosomal segregation during cell division. May also be involved in contractile ring formation during cytokinesis.</text>
</comment>
<comment type="catalytic activity">
    <reaction evidence="2">
        <text>GTP + H2O = GDP + phosphate + H(+)</text>
        <dbReference type="Rhea" id="RHEA:19669"/>
        <dbReference type="ChEBI" id="CHEBI:15377"/>
        <dbReference type="ChEBI" id="CHEBI:15378"/>
        <dbReference type="ChEBI" id="CHEBI:37565"/>
        <dbReference type="ChEBI" id="CHEBI:43474"/>
        <dbReference type="ChEBI" id="CHEBI:58189"/>
        <dbReference type="EC" id="3.6.5.2"/>
    </reaction>
    <physiologicalReaction direction="left-to-right" evidence="2">
        <dbReference type="Rhea" id="RHEA:19670"/>
    </physiologicalReaction>
</comment>
<comment type="activity regulation">
    <text evidence="2">Regulated by guanine nucleotide exchange factors (GEFs) which promote the exchange of bound GDP for free GTP, GTPase activating proteins (GAPs) which increase the GTP hydrolysis activity and GDP dissociation inhibitors which inhibit the dissociation of the nucleotide from the GTPase. Activated by GEFs such as ARHGEF2, ARHGEF3, ARHGEF28 and BCR. Inhibited by GAPs such as ARHGAP30. Inhibited by GDP dissociation inhibitors such as ARHGDIA.</text>
</comment>
<comment type="subunit">
    <text evidence="2 5">Interacts with ARHGEF28 (By similarity). Interacts (via GTP-bound form) with RIPOR1 (via N-terminus); this interaction links RHOA to STK24 and STK26 kinases. Interacts with RIPOR2 (via active GTP- or inactive GDP-bound forms) isoform 1 and isoform 2; these interactions are direct, block the loading of GTP to RHOA and decrease upon chemokine CCL19 stimulation in primary T lymphocytes. Binds PRKCL1, ROCK1 and ROCK2. Interacts with ARHGEF2, ARHGEF3, NET1 and RTKN. Interacts with PLCE1 and AKAP13. Interacts with DIAPH1. Interacts (in the constitutively activated, GTP-bound form) with DGKQ. Interacts with RACK1; enhances RHOA activation. Interacts with PKP4; the interaction is detected at the midbody. Interacts (GTP-bound form preferentially) with PKN2; the interaction stimulates autophosphorylation and phosphorylation of PKN2. Interacts with ARHGDIA; this interaction inactivates and stabilizes RHOA. Interacts with ARHGDIB. Interacts (GTP-bound form) with KCNA2 (via cytoplasmic N-terminal domain) (By similarity). Interacts (GTP-bound form) with ECT2; the interaction results in allosteric activation of ECT2. Interacts with RAP1GDS1; the interaction is direct and in a 1:1 stoichiometry (By similarity).</text>
</comment>
<comment type="subcellular location">
    <subcellularLocation>
        <location evidence="2">Cell membrane</location>
        <topology evidence="2">Lipid-anchor</topology>
        <orientation evidence="2">Cytoplasmic side</orientation>
    </subcellularLocation>
    <subcellularLocation>
        <location evidence="2">Cytoplasm</location>
        <location evidence="2">Cytoskeleton</location>
    </subcellularLocation>
    <subcellularLocation>
        <location evidence="2">Cleavage furrow</location>
    </subcellularLocation>
    <subcellularLocation>
        <location evidence="2">Cytoplasm</location>
        <location evidence="2">Cell cortex</location>
    </subcellularLocation>
    <subcellularLocation>
        <location evidence="2">Midbody</location>
    </subcellularLocation>
    <subcellularLocation>
        <location evidence="5">Cell projection</location>
        <location evidence="5">Lamellipodium</location>
    </subcellularLocation>
    <subcellularLocation>
        <location evidence="5">Cell projection</location>
        <location evidence="5">Dendrite</location>
    </subcellularLocation>
    <subcellularLocation>
        <location evidence="2">Nucleus</location>
    </subcellularLocation>
    <subcellularLocation>
        <location evidence="2">Cytoplasm</location>
    </subcellularLocation>
    <text evidence="5">Localized to cell-cell contacts in calcium-treated keratinocytes (By similarity). Translocates to the equatorial region before furrow formation in a ECT2-dependent manner. Localizes to the equatorial cell cortex (at the site of the presumptive furrow) in early anaphase in an activated form and in a myosin- and actin-independent manner. Colocalizes with KANK1 at the contractile ring. Colocalizes with DAAM1 and KANK1 around centrosomes.</text>
</comment>
<comment type="PTM">
    <text evidence="2 5">Ubiquitinated by the BCR(KCTD13) and BCR(TNFAIP1) E3 ubiquitin ligase complexes, leading to its degradation by the proteasome, thereby regulating the actin cytoskeleton and synaptic transmission in neurons. Ubiquitinated at Lys-135 in a FBXL19-mediated manner; leading to proteasomal degradation.</text>
</comment>
<comment type="PTM">
    <text evidence="2 3">Phosphorylation by PRKG1 at Ser-188 inactivates RHOA signaling (By similarity). Phosphorylation by SLK at Ser-188 in response to AGTR2 activation (By similarity).</text>
</comment>
<comment type="PTM">
    <text evidence="5">Serotonylation of Gln-63 by TGM2 during activation and aggregation of platelets leads to constitutive activation of GTPase activity.</text>
</comment>
<comment type="similarity">
    <text evidence="7">Belongs to the small GTPase superfamily. Rho family.</text>
</comment>
<accession>P24406</accession>